<reference key="1">
    <citation type="journal article" date="2010" name="Genome Biol. Evol.">
        <title>Continuing evolution of Burkholderia mallei through genome reduction and large-scale rearrangements.</title>
        <authorList>
            <person name="Losada L."/>
            <person name="Ronning C.M."/>
            <person name="DeShazer D."/>
            <person name="Woods D."/>
            <person name="Fedorova N."/>
            <person name="Kim H.S."/>
            <person name="Shabalina S.A."/>
            <person name="Pearson T.R."/>
            <person name="Brinkac L."/>
            <person name="Tan P."/>
            <person name="Nandi T."/>
            <person name="Crabtree J."/>
            <person name="Badger J."/>
            <person name="Beckstrom-Sternberg S."/>
            <person name="Saqib M."/>
            <person name="Schutzer S.E."/>
            <person name="Keim P."/>
            <person name="Nierman W.C."/>
        </authorList>
    </citation>
    <scope>NUCLEOTIDE SEQUENCE [LARGE SCALE GENOMIC DNA]</scope>
    <source>
        <strain>668</strain>
    </source>
</reference>
<comment type="function">
    <text evidence="1">Together with its co-chaperonin GroES, plays an essential role in assisting protein folding. The GroEL-GroES system forms a nano-cage that allows encapsulation of the non-native substrate proteins and provides a physical environment optimized to promote and accelerate protein folding.</text>
</comment>
<comment type="catalytic activity">
    <reaction evidence="1">
        <text>ATP + H2O + a folded polypeptide = ADP + phosphate + an unfolded polypeptide.</text>
        <dbReference type="EC" id="5.6.1.7"/>
    </reaction>
</comment>
<comment type="subunit">
    <text evidence="1">Forms a cylinder of 14 subunits composed of two heptameric rings stacked back-to-back. Interacts with the co-chaperonin GroES.</text>
</comment>
<comment type="subcellular location">
    <subcellularLocation>
        <location evidence="1">Cytoplasm</location>
    </subcellularLocation>
</comment>
<comment type="similarity">
    <text evidence="1">Belongs to the chaperonin (HSP60) family.</text>
</comment>
<name>CH602_BURP6</name>
<accession>A3NHB6</accession>
<keyword id="KW-0067">ATP-binding</keyword>
<keyword id="KW-0143">Chaperone</keyword>
<keyword id="KW-0963">Cytoplasm</keyword>
<keyword id="KW-0413">Isomerase</keyword>
<keyword id="KW-0547">Nucleotide-binding</keyword>
<evidence type="ECO:0000255" key="1">
    <source>
        <dbReference type="HAMAP-Rule" id="MF_00600"/>
    </source>
</evidence>
<evidence type="ECO:0000256" key="2">
    <source>
        <dbReference type="SAM" id="MobiDB-lite"/>
    </source>
</evidence>
<dbReference type="EC" id="5.6.1.7" evidence="1"/>
<dbReference type="EMBL" id="CP000571">
    <property type="protein sequence ID" value="ABN86128.1"/>
    <property type="molecule type" value="Genomic_DNA"/>
</dbReference>
<dbReference type="RefSeq" id="WP_011852766.1">
    <property type="nucleotide sequence ID" value="NC_009075.1"/>
</dbReference>
<dbReference type="SMR" id="A3NHB6"/>
<dbReference type="KEGG" id="bpd:BURPS668_A0738"/>
<dbReference type="HOGENOM" id="CLU_016503_3_0_4"/>
<dbReference type="GO" id="GO:0005737">
    <property type="term" value="C:cytoplasm"/>
    <property type="evidence" value="ECO:0007669"/>
    <property type="project" value="UniProtKB-SubCell"/>
</dbReference>
<dbReference type="GO" id="GO:0005524">
    <property type="term" value="F:ATP binding"/>
    <property type="evidence" value="ECO:0007669"/>
    <property type="project" value="UniProtKB-UniRule"/>
</dbReference>
<dbReference type="GO" id="GO:0140662">
    <property type="term" value="F:ATP-dependent protein folding chaperone"/>
    <property type="evidence" value="ECO:0007669"/>
    <property type="project" value="InterPro"/>
</dbReference>
<dbReference type="GO" id="GO:0016853">
    <property type="term" value="F:isomerase activity"/>
    <property type="evidence" value="ECO:0007669"/>
    <property type="project" value="UniProtKB-KW"/>
</dbReference>
<dbReference type="GO" id="GO:0051082">
    <property type="term" value="F:unfolded protein binding"/>
    <property type="evidence" value="ECO:0007669"/>
    <property type="project" value="UniProtKB-UniRule"/>
</dbReference>
<dbReference type="GO" id="GO:0042026">
    <property type="term" value="P:protein refolding"/>
    <property type="evidence" value="ECO:0007669"/>
    <property type="project" value="UniProtKB-UniRule"/>
</dbReference>
<dbReference type="CDD" id="cd03344">
    <property type="entry name" value="GroEL"/>
    <property type="match status" value="1"/>
</dbReference>
<dbReference type="FunFam" id="3.50.7.10:FF:000001">
    <property type="entry name" value="60 kDa chaperonin"/>
    <property type="match status" value="1"/>
</dbReference>
<dbReference type="Gene3D" id="3.50.7.10">
    <property type="entry name" value="GroEL"/>
    <property type="match status" value="1"/>
</dbReference>
<dbReference type="Gene3D" id="1.10.560.10">
    <property type="entry name" value="GroEL-like equatorial domain"/>
    <property type="match status" value="1"/>
</dbReference>
<dbReference type="Gene3D" id="3.30.260.10">
    <property type="entry name" value="TCP-1-like chaperonin intermediate domain"/>
    <property type="match status" value="1"/>
</dbReference>
<dbReference type="HAMAP" id="MF_00600">
    <property type="entry name" value="CH60"/>
    <property type="match status" value="1"/>
</dbReference>
<dbReference type="InterPro" id="IPR018370">
    <property type="entry name" value="Chaperonin_Cpn60_CS"/>
</dbReference>
<dbReference type="InterPro" id="IPR001844">
    <property type="entry name" value="Cpn60/GroEL"/>
</dbReference>
<dbReference type="InterPro" id="IPR002423">
    <property type="entry name" value="Cpn60/GroEL/TCP-1"/>
</dbReference>
<dbReference type="InterPro" id="IPR027409">
    <property type="entry name" value="GroEL-like_apical_dom_sf"/>
</dbReference>
<dbReference type="InterPro" id="IPR027413">
    <property type="entry name" value="GROEL-like_equatorial_sf"/>
</dbReference>
<dbReference type="InterPro" id="IPR027410">
    <property type="entry name" value="TCP-1-like_intermed_sf"/>
</dbReference>
<dbReference type="NCBIfam" id="TIGR02348">
    <property type="entry name" value="GroEL"/>
    <property type="match status" value="1"/>
</dbReference>
<dbReference type="NCBIfam" id="NF000592">
    <property type="entry name" value="PRK00013.1"/>
    <property type="match status" value="1"/>
</dbReference>
<dbReference type="NCBIfam" id="NF009487">
    <property type="entry name" value="PRK12849.1"/>
    <property type="match status" value="1"/>
</dbReference>
<dbReference type="NCBIfam" id="NF009488">
    <property type="entry name" value="PRK12850.1"/>
    <property type="match status" value="1"/>
</dbReference>
<dbReference type="NCBIfam" id="NF009489">
    <property type="entry name" value="PRK12851.1"/>
    <property type="match status" value="1"/>
</dbReference>
<dbReference type="PANTHER" id="PTHR45633">
    <property type="entry name" value="60 KDA HEAT SHOCK PROTEIN, MITOCHONDRIAL"/>
    <property type="match status" value="1"/>
</dbReference>
<dbReference type="Pfam" id="PF00118">
    <property type="entry name" value="Cpn60_TCP1"/>
    <property type="match status" value="1"/>
</dbReference>
<dbReference type="PRINTS" id="PR00298">
    <property type="entry name" value="CHAPERONIN60"/>
</dbReference>
<dbReference type="SUPFAM" id="SSF52029">
    <property type="entry name" value="GroEL apical domain-like"/>
    <property type="match status" value="1"/>
</dbReference>
<dbReference type="SUPFAM" id="SSF48592">
    <property type="entry name" value="GroEL equatorial domain-like"/>
    <property type="match status" value="1"/>
</dbReference>
<dbReference type="SUPFAM" id="SSF54849">
    <property type="entry name" value="GroEL-intermediate domain like"/>
    <property type="match status" value="1"/>
</dbReference>
<dbReference type="PROSITE" id="PS00296">
    <property type="entry name" value="CHAPERONINS_CPN60"/>
    <property type="match status" value="1"/>
</dbReference>
<feature type="chain" id="PRO_0000331990" description="Chaperonin GroEL 2">
    <location>
        <begin position="1"/>
        <end position="548"/>
    </location>
</feature>
<feature type="region of interest" description="Disordered" evidence="2">
    <location>
        <begin position="524"/>
        <end position="548"/>
    </location>
</feature>
<feature type="compositionally biased region" description="Gly residues" evidence="2">
    <location>
        <begin position="537"/>
        <end position="548"/>
    </location>
</feature>
<feature type="binding site" evidence="1">
    <location>
        <begin position="30"/>
        <end position="33"/>
    </location>
    <ligand>
        <name>ATP</name>
        <dbReference type="ChEBI" id="CHEBI:30616"/>
    </ligand>
</feature>
<feature type="binding site" evidence="1">
    <location>
        <position position="51"/>
    </location>
    <ligand>
        <name>ATP</name>
        <dbReference type="ChEBI" id="CHEBI:30616"/>
    </ligand>
</feature>
<feature type="binding site" evidence="1">
    <location>
        <begin position="87"/>
        <end position="91"/>
    </location>
    <ligand>
        <name>ATP</name>
        <dbReference type="ChEBI" id="CHEBI:30616"/>
    </ligand>
</feature>
<feature type="binding site" evidence="1">
    <location>
        <position position="415"/>
    </location>
    <ligand>
        <name>ATP</name>
        <dbReference type="ChEBI" id="CHEBI:30616"/>
    </ligand>
</feature>
<feature type="binding site" evidence="1">
    <location>
        <begin position="479"/>
        <end position="481"/>
    </location>
    <ligand>
        <name>ATP</name>
        <dbReference type="ChEBI" id="CHEBI:30616"/>
    </ligand>
</feature>
<feature type="binding site" evidence="1">
    <location>
        <position position="495"/>
    </location>
    <ligand>
        <name>ATP</name>
        <dbReference type="ChEBI" id="CHEBI:30616"/>
    </ligand>
</feature>
<organism>
    <name type="scientific">Burkholderia pseudomallei (strain 668)</name>
    <dbReference type="NCBI Taxonomy" id="320373"/>
    <lineage>
        <taxon>Bacteria</taxon>
        <taxon>Pseudomonadati</taxon>
        <taxon>Pseudomonadota</taxon>
        <taxon>Betaproteobacteria</taxon>
        <taxon>Burkholderiales</taxon>
        <taxon>Burkholderiaceae</taxon>
        <taxon>Burkholderia</taxon>
        <taxon>pseudomallei group</taxon>
    </lineage>
</organism>
<sequence length="548" mass="57132">MAAKEIIFHDGARAKLVEGVNLLANAVKVTLGPKGRNVVLERSFGSPVVTKDGVSVAKEIELADKVQNIGAQLVKEVASKTSDAAGDGTTTATVLAQAIVREGQKYVAAGLNPLDLKRGIDKAVAAAVDELKKISKPTTTSKEIAQVATISANGEESIGQRIAEAIDRVGKEGVITVEDGKSLADELDVVEGLQFDRGYLSPYFINHPERQLAVLDEPFILLHDKKISNIRDLLPVLEQVAKAGRPLLIVAEDVEGEALATLVVNNIRGILKTVAVKAPGFGDRRKALLEDIAILTGGQVITEETGLTLEKATLQELGRAKRIEVGKENTTLIDGAGDKPNIDARVKQIRAQIAEATSDYDREKLQERVAKLAGGVAVIKVGGATEVEVKEKKDRVDDALHATRAAVEEGIVPGGGVALIRVKQAIAALAGANADQKAGISIVLRALEEPLRQIVANAGEEASVVVATVAAGQGNYGYNAATGEYGDLVESGVLDPTKVTRTALQNAASIAGLLLTTDATVHEAPKDAPPTAPAGVPGAGAGGPGFDF</sequence>
<gene>
    <name evidence="1" type="primary">groEL2</name>
    <name evidence="1" type="synonym">groL2</name>
    <name type="ordered locus">BURPS668_A0738</name>
</gene>
<proteinExistence type="inferred from homology"/>
<protein>
    <recommendedName>
        <fullName evidence="1">Chaperonin GroEL 2</fullName>
        <ecNumber evidence="1">5.6.1.7</ecNumber>
    </recommendedName>
    <alternativeName>
        <fullName evidence="1">60 kDa chaperonin 2</fullName>
    </alternativeName>
    <alternativeName>
        <fullName evidence="1">Chaperonin-60 2</fullName>
        <shortName evidence="1">Cpn60 2</shortName>
    </alternativeName>
</protein>